<sequence length="802" mass="90761">MRFLQVYKSSALIGLIILLASKVNLAEAKRKLVATSLVTCMENSQLSANSFDVVFNPDDRSLHYDLDMSTQIDSYIFADIDVYAYGFKIITKNVDLCSINWKQFCPVHPGNIQIDSIEYISSEYVNEIPGIAYQVPDIDAYARVKITNNVSEYLACIQIYFSNGKTVSQIGVKWATAVVAGIGLLLSAILSTFGNSTAASHISANTMSLFLYFQSVVVVAMQHVHRVPPIAAAWAENLVWSMGLIRISFMQRIFRWYVQSTGGTPSLYLTSTSMSVLAQRSWQYLMELPLIKRATNVLYGNANTLIFRGIKRLGYKMGIENTSIVCTGFTFFVLCGYVLAGFIIVFKCCVELATRLGWIQKARFWEFRKQWRMILKGALLRYIYIGFVQLTILSFWEFTERDSPAVIVIACLFILLSCGLMLWAAWRTVFFARRSVALYNNPAALLYGDEYVLHKYGFFYTMFNANHYWWNIVLLSYIFVKSLLVGFAQASGQTQVLFMFILDLFYFVAIIYYKPYLDRPTNIMNILIATVTVVNSFLFMFFSDLFNQSYKVAAIMGWIFFIMNAAFSFILLMMILAFAGMMLFSKNPDLRFKPAKDDRTSFQRNTMKPEGTVNRSVANELLALGNVAKDHDDNSDYESNDTGVNDELKQAQDETTPTTVTSSDDNKPTFSEKILSKFSRPKNENASTDALRVEAPKQQTFPHNLTNLSRENLSTLGSKPYPGHTRSQSDAHNGLINSFEEEDTSSNTDPFHDSTEGDLLDTSSSDGGFRSQNYVRDDSINSLGNNKQPLRKPPGFFDEGFM</sequence>
<keyword id="KW-0256">Endoplasmic reticulum</keyword>
<keyword id="KW-0325">Glycoprotein</keyword>
<keyword id="KW-0472">Membrane</keyword>
<keyword id="KW-0597">Phosphoprotein</keyword>
<keyword id="KW-1185">Reference proteome</keyword>
<keyword id="KW-0732">Signal</keyword>
<keyword id="KW-0812">Transmembrane</keyword>
<keyword id="KW-1133">Transmembrane helix</keyword>
<keyword id="KW-0813">Transport</keyword>
<name>FLC3_YEAST</name>
<comment type="function">
    <text evidence="1">May be responsible for the transport of FAD into the endoplasmic reticulum lumen, where it is required for oxidative protein folding.</text>
</comment>
<comment type="subcellular location">
    <subcellularLocation>
        <location evidence="4">Endoplasmic reticulum membrane</location>
        <topology evidence="4">Multi-pass membrane protein</topology>
    </subcellularLocation>
</comment>
<comment type="similarity">
    <text evidence="5">Belongs to the transient receptor potential (TRP) ion channel family.</text>
</comment>
<dbReference type="EMBL" id="X99960">
    <property type="protein sequence ID" value="CAA68223.1"/>
    <property type="molecule type" value="Genomic_DNA"/>
</dbReference>
<dbReference type="EMBL" id="Z72661">
    <property type="protein sequence ID" value="CAA96851.1"/>
    <property type="molecule type" value="Genomic_DNA"/>
</dbReference>
<dbReference type="EMBL" id="Z72660">
    <property type="protein sequence ID" value="CAA96850.1"/>
    <property type="molecule type" value="Genomic_DNA"/>
</dbReference>
<dbReference type="EMBL" id="X92670">
    <property type="protein sequence ID" value="CAA63357.1"/>
    <property type="molecule type" value="Genomic_DNA"/>
</dbReference>
<dbReference type="EMBL" id="BK006941">
    <property type="protein sequence ID" value="DAA07971.1"/>
    <property type="molecule type" value="Genomic_DNA"/>
</dbReference>
<dbReference type="PIR" id="S64153">
    <property type="entry name" value="S64153"/>
</dbReference>
<dbReference type="RefSeq" id="NP_011376.3">
    <property type="nucleotide sequence ID" value="NM_001181004.3"/>
</dbReference>
<dbReference type="BioGRID" id="33113">
    <property type="interactions" value="46"/>
</dbReference>
<dbReference type="DIP" id="DIP-5496N"/>
<dbReference type="FunCoup" id="P53121">
    <property type="interactions" value="27"/>
</dbReference>
<dbReference type="STRING" id="4932.YGL139W"/>
<dbReference type="GlyCosmos" id="P53121">
    <property type="glycosylation" value="3 sites, No reported glycans"/>
</dbReference>
<dbReference type="GlyGen" id="P53121">
    <property type="glycosylation" value="4 sites"/>
</dbReference>
<dbReference type="iPTMnet" id="P53121"/>
<dbReference type="PaxDb" id="4932-YGL139W"/>
<dbReference type="PeptideAtlas" id="P53121"/>
<dbReference type="EnsemblFungi" id="YGL139W_mRNA">
    <property type="protein sequence ID" value="YGL139W"/>
    <property type="gene ID" value="YGL139W"/>
</dbReference>
<dbReference type="GeneID" id="852738"/>
<dbReference type="KEGG" id="sce:YGL139W"/>
<dbReference type="AGR" id="SGD:S000003107"/>
<dbReference type="SGD" id="S000003107">
    <property type="gene designation" value="FLC3"/>
</dbReference>
<dbReference type="VEuPathDB" id="FungiDB:YGL139W"/>
<dbReference type="eggNOG" id="ENOG502QSVZ">
    <property type="taxonomic scope" value="Eukaryota"/>
</dbReference>
<dbReference type="GeneTree" id="ENSGT00940000176312"/>
<dbReference type="HOGENOM" id="CLU_010226_0_0_1"/>
<dbReference type="InParanoid" id="P53121"/>
<dbReference type="OMA" id="SIMGWVF"/>
<dbReference type="OrthoDB" id="5212126at2759"/>
<dbReference type="BioCyc" id="YEAST:G3O-30634-MONOMER"/>
<dbReference type="BioGRID-ORCS" id="852738">
    <property type="hits" value="0 hits in 10 CRISPR screens"/>
</dbReference>
<dbReference type="PRO" id="PR:P53121"/>
<dbReference type="Proteomes" id="UP000002311">
    <property type="component" value="Chromosome VII"/>
</dbReference>
<dbReference type="RNAct" id="P53121">
    <property type="molecule type" value="protein"/>
</dbReference>
<dbReference type="GO" id="GO:0005783">
    <property type="term" value="C:endoplasmic reticulum"/>
    <property type="evidence" value="ECO:0000314"/>
    <property type="project" value="SGD"/>
</dbReference>
<dbReference type="GO" id="GO:0005789">
    <property type="term" value="C:endoplasmic reticulum membrane"/>
    <property type="evidence" value="ECO:0007669"/>
    <property type="project" value="UniProtKB-SubCell"/>
</dbReference>
<dbReference type="GO" id="GO:0016020">
    <property type="term" value="C:membrane"/>
    <property type="evidence" value="ECO:0000318"/>
    <property type="project" value="GO_Central"/>
</dbReference>
<dbReference type="GO" id="GO:0005739">
    <property type="term" value="C:mitochondrion"/>
    <property type="evidence" value="ECO:0007005"/>
    <property type="project" value="SGD"/>
</dbReference>
<dbReference type="GO" id="GO:0015230">
    <property type="term" value="F:FAD transmembrane transporter activity"/>
    <property type="evidence" value="ECO:0000250"/>
    <property type="project" value="SGD"/>
</dbReference>
<dbReference type="GO" id="GO:0015883">
    <property type="term" value="P:FAD transport"/>
    <property type="evidence" value="ECO:0000250"/>
    <property type="project" value="SGD"/>
</dbReference>
<dbReference type="GO" id="GO:0009272">
    <property type="term" value="P:fungal-type cell wall biogenesis"/>
    <property type="evidence" value="ECO:0000318"/>
    <property type="project" value="GO_Central"/>
</dbReference>
<dbReference type="GO" id="GO:0030148">
    <property type="term" value="P:sphingolipid biosynthetic process"/>
    <property type="evidence" value="ECO:0000316"/>
    <property type="project" value="SGD"/>
</dbReference>
<dbReference type="GO" id="GO:0055085">
    <property type="term" value="P:transmembrane transport"/>
    <property type="evidence" value="ECO:0000250"/>
    <property type="project" value="SGD"/>
</dbReference>
<dbReference type="InterPro" id="IPR010308">
    <property type="entry name" value="TRP_C"/>
</dbReference>
<dbReference type="InterPro" id="IPR040241">
    <property type="entry name" value="TRP_Flc/Pkd2-like"/>
</dbReference>
<dbReference type="InterPro" id="IPR032800">
    <property type="entry name" value="TRP_N"/>
</dbReference>
<dbReference type="PANTHER" id="PTHR31145:SF4">
    <property type="entry name" value="FLAVIN CARRIER PROTEIN 1-RELATED"/>
    <property type="match status" value="1"/>
</dbReference>
<dbReference type="PANTHER" id="PTHR31145">
    <property type="entry name" value="INTEGRAL MEMBRANE PROTEIN (AFU_ORTHOLOGUE AFUA_7G01610)"/>
    <property type="match status" value="1"/>
</dbReference>
<dbReference type="Pfam" id="PF06011">
    <property type="entry name" value="TRP"/>
    <property type="match status" value="1"/>
</dbReference>
<dbReference type="Pfam" id="PF14558">
    <property type="entry name" value="TRP_N"/>
    <property type="match status" value="1"/>
</dbReference>
<dbReference type="SMART" id="SM01320">
    <property type="entry name" value="TRP_N"/>
    <property type="match status" value="1"/>
</dbReference>
<organism>
    <name type="scientific">Saccharomyces cerevisiae (strain ATCC 204508 / S288c)</name>
    <name type="common">Baker's yeast</name>
    <dbReference type="NCBI Taxonomy" id="559292"/>
    <lineage>
        <taxon>Eukaryota</taxon>
        <taxon>Fungi</taxon>
        <taxon>Dikarya</taxon>
        <taxon>Ascomycota</taxon>
        <taxon>Saccharomycotina</taxon>
        <taxon>Saccharomycetes</taxon>
        <taxon>Saccharomycetales</taxon>
        <taxon>Saccharomycetaceae</taxon>
        <taxon>Saccharomyces</taxon>
    </lineage>
</organism>
<feature type="signal peptide" evidence="2">
    <location>
        <begin position="1"/>
        <end position="28"/>
    </location>
</feature>
<feature type="chain" id="PRO_0000202738" description="Putative flavin carrier protein 3">
    <location>
        <begin position="29"/>
        <end position="802"/>
    </location>
</feature>
<feature type="topological domain" description="Lumenal" evidence="2">
    <location>
        <begin position="29"/>
        <end position="169"/>
    </location>
</feature>
<feature type="transmembrane region" description="Helical" evidence="2">
    <location>
        <begin position="170"/>
        <end position="190"/>
    </location>
</feature>
<feature type="topological domain" description="Cytoplasmic" evidence="2">
    <location>
        <begin position="191"/>
        <end position="200"/>
    </location>
</feature>
<feature type="transmembrane region" description="Helical" evidence="2">
    <location>
        <begin position="201"/>
        <end position="221"/>
    </location>
</feature>
<feature type="topological domain" description="Lumenal" evidence="2">
    <location>
        <begin position="222"/>
        <end position="229"/>
    </location>
</feature>
<feature type="transmembrane region" description="Helical" evidence="2">
    <location>
        <begin position="230"/>
        <end position="250"/>
    </location>
</feature>
<feature type="topological domain" description="Cytoplasmic" evidence="2">
    <location>
        <begin position="251"/>
        <end position="255"/>
    </location>
</feature>
<feature type="transmembrane region" description="Helical" evidence="2">
    <location>
        <begin position="256"/>
        <end position="278"/>
    </location>
</feature>
<feature type="topological domain" description="Lumenal" evidence="2">
    <location>
        <begin position="279"/>
        <end position="323"/>
    </location>
</feature>
<feature type="transmembrane region" description="Helical" evidence="2">
    <location>
        <begin position="324"/>
        <end position="344"/>
    </location>
</feature>
<feature type="topological domain" description="Cytoplasmic" evidence="2">
    <location>
        <begin position="345"/>
        <end position="377"/>
    </location>
</feature>
<feature type="transmembrane region" description="Helical" evidence="2">
    <location>
        <begin position="378"/>
        <end position="398"/>
    </location>
</feature>
<feature type="topological domain" description="Lumenal" evidence="2">
    <location>
        <begin position="399"/>
        <end position="405"/>
    </location>
</feature>
<feature type="transmembrane region" description="Helical" evidence="2">
    <location>
        <begin position="406"/>
        <end position="426"/>
    </location>
</feature>
<feature type="topological domain" description="Cytoplasmic" evidence="2">
    <location>
        <begin position="427"/>
        <end position="467"/>
    </location>
</feature>
<feature type="transmembrane region" description="Helical" evidence="2">
    <location>
        <begin position="468"/>
        <end position="488"/>
    </location>
</feature>
<feature type="topological domain" description="Lumenal" evidence="2">
    <location>
        <begin position="489"/>
        <end position="495"/>
    </location>
</feature>
<feature type="transmembrane region" description="Helical" evidence="2">
    <location>
        <begin position="496"/>
        <end position="516"/>
    </location>
</feature>
<feature type="topological domain" description="Cytoplasmic" evidence="2">
    <location>
        <begin position="517"/>
        <end position="525"/>
    </location>
</feature>
<feature type="transmembrane region" description="Helical" evidence="2">
    <location>
        <begin position="526"/>
        <end position="546"/>
    </location>
</feature>
<feature type="topological domain" description="Lumenal" evidence="2">
    <location>
        <begin position="547"/>
        <end position="557"/>
    </location>
</feature>
<feature type="transmembrane region" description="Helical" evidence="2">
    <location>
        <begin position="558"/>
        <end position="578"/>
    </location>
</feature>
<feature type="topological domain" description="Cytoplasmic" evidence="2">
    <location>
        <begin position="579"/>
        <end position="802"/>
    </location>
</feature>
<feature type="region of interest" description="Disordered" evidence="3">
    <location>
        <begin position="629"/>
        <end position="802"/>
    </location>
</feature>
<feature type="compositionally biased region" description="Polar residues" evidence="3">
    <location>
        <begin position="653"/>
        <end position="663"/>
    </location>
</feature>
<feature type="compositionally biased region" description="Polar residues" evidence="3">
    <location>
        <begin position="697"/>
        <end position="717"/>
    </location>
</feature>
<feature type="compositionally biased region" description="Polar residues" evidence="3">
    <location>
        <begin position="761"/>
        <end position="788"/>
    </location>
</feature>
<feature type="modified residue" description="Phosphoserine" evidence="6 7">
    <location>
        <position position="616"/>
    </location>
</feature>
<feature type="modified residue" description="Phosphoserine" evidence="7">
    <location>
        <position position="635"/>
    </location>
</feature>
<feature type="modified residue" description="Phosphoserine" evidence="6 7">
    <location>
        <position position="779"/>
    </location>
</feature>
<feature type="modified residue" description="Phosphoserine" evidence="6 7">
    <location>
        <position position="782"/>
    </location>
</feature>
<feature type="glycosylation site" description="N-linked (GlcNAc...) asparagine" evidence="2">
    <location>
        <position position="149"/>
    </location>
</feature>
<feature type="glycosylation site" description="N-linked (GlcNAc...) asparagine" evidence="2">
    <location>
        <position position="321"/>
    </location>
</feature>
<feature type="glycosylation site" description="N-linked (GlcNAc...) asparagine" evidence="2">
    <location>
        <position position="547"/>
    </location>
</feature>
<accession>P53121</accession>
<accession>D6VU10</accession>
<proteinExistence type="evidence at protein level"/>
<evidence type="ECO:0000250" key="1"/>
<evidence type="ECO:0000255" key="2"/>
<evidence type="ECO:0000256" key="3">
    <source>
        <dbReference type="SAM" id="MobiDB-lite"/>
    </source>
</evidence>
<evidence type="ECO:0000269" key="4">
    <source>
    </source>
</evidence>
<evidence type="ECO:0000305" key="5"/>
<evidence type="ECO:0007744" key="6">
    <source>
    </source>
</evidence>
<evidence type="ECO:0007744" key="7">
    <source>
    </source>
</evidence>
<gene>
    <name type="primary">FLC3</name>
    <name type="ordered locus">YGL139W</name>
    <name type="ORF">G2812</name>
</gene>
<reference key="1">
    <citation type="journal article" date="1997" name="Nature">
        <title>The nucleotide sequence of Saccharomyces cerevisiae chromosome VII.</title>
        <authorList>
            <person name="Tettelin H."/>
            <person name="Agostoni-Carbone M.L."/>
            <person name="Albermann K."/>
            <person name="Albers M."/>
            <person name="Arroyo J."/>
            <person name="Backes U."/>
            <person name="Barreiros T."/>
            <person name="Bertani I."/>
            <person name="Bjourson A.J."/>
            <person name="Brueckner M."/>
            <person name="Bruschi C.V."/>
            <person name="Carignani G."/>
            <person name="Castagnoli L."/>
            <person name="Cerdan E."/>
            <person name="Clemente M.L."/>
            <person name="Coblenz A."/>
            <person name="Coglievina M."/>
            <person name="Coissac E."/>
            <person name="Defoor E."/>
            <person name="Del Bino S."/>
            <person name="Delius H."/>
            <person name="Delneri D."/>
            <person name="de Wergifosse P."/>
            <person name="Dujon B."/>
            <person name="Durand P."/>
            <person name="Entian K.-D."/>
            <person name="Eraso P."/>
            <person name="Escribano V."/>
            <person name="Fabiani L."/>
            <person name="Fartmann B."/>
            <person name="Feroli F."/>
            <person name="Feuermann M."/>
            <person name="Frontali L."/>
            <person name="Garcia-Gonzalez M."/>
            <person name="Garcia-Saez M.I."/>
            <person name="Goffeau A."/>
            <person name="Guerreiro P."/>
            <person name="Hani J."/>
            <person name="Hansen M."/>
            <person name="Hebling U."/>
            <person name="Hernandez K."/>
            <person name="Heumann K."/>
            <person name="Hilger F."/>
            <person name="Hofmann B."/>
            <person name="Indge K.J."/>
            <person name="James C.M."/>
            <person name="Klima R."/>
            <person name="Koetter P."/>
            <person name="Kramer B."/>
            <person name="Kramer W."/>
            <person name="Lauquin G."/>
            <person name="Leuther H."/>
            <person name="Louis E.J."/>
            <person name="Maillier E."/>
            <person name="Marconi A."/>
            <person name="Martegani E."/>
            <person name="Mazon M.J."/>
            <person name="Mazzoni C."/>
            <person name="McReynolds A.D.K."/>
            <person name="Melchioretto P."/>
            <person name="Mewes H.-W."/>
            <person name="Minenkova O."/>
            <person name="Mueller-Auer S."/>
            <person name="Nawrocki A."/>
            <person name="Netter P."/>
            <person name="Neu R."/>
            <person name="Nombela C."/>
            <person name="Oliver S.G."/>
            <person name="Panzeri L."/>
            <person name="Paoluzi S."/>
            <person name="Plevani P."/>
            <person name="Portetelle D."/>
            <person name="Portillo F."/>
            <person name="Potier S."/>
            <person name="Purnelle B."/>
            <person name="Rieger M."/>
            <person name="Riles L."/>
            <person name="Rinaldi T."/>
            <person name="Robben J."/>
            <person name="Rodrigues-Pousada C."/>
            <person name="Rodriguez-Belmonte E."/>
            <person name="Rodriguez-Torres A.M."/>
            <person name="Rose M."/>
            <person name="Ruzzi M."/>
            <person name="Saliola M."/>
            <person name="Sanchez-Perez M."/>
            <person name="Schaefer B."/>
            <person name="Schaefer M."/>
            <person name="Scharfe M."/>
            <person name="Schmidheini T."/>
            <person name="Schreer A."/>
            <person name="Skala J."/>
            <person name="Souciet J.-L."/>
            <person name="Steensma H.Y."/>
            <person name="Talla E."/>
            <person name="Thierry A."/>
            <person name="Vandenbol M."/>
            <person name="van der Aart Q.J.M."/>
            <person name="Van Dyck L."/>
            <person name="Vanoni M."/>
            <person name="Verhasselt P."/>
            <person name="Voet M."/>
            <person name="Volckaert G."/>
            <person name="Wambutt R."/>
            <person name="Watson M.D."/>
            <person name="Weber N."/>
            <person name="Wedler E."/>
            <person name="Wedler H."/>
            <person name="Wipfli P."/>
            <person name="Wolf K."/>
            <person name="Wright L.F."/>
            <person name="Zaccaria P."/>
            <person name="Zimmermann M."/>
            <person name="Zollner A."/>
            <person name="Kleine K."/>
        </authorList>
    </citation>
    <scope>NUCLEOTIDE SEQUENCE [LARGE SCALE GENOMIC DNA]</scope>
    <source>
        <strain>ATCC 204508 / S288c</strain>
    </source>
</reference>
<reference key="2">
    <citation type="journal article" date="2014" name="G3 (Bethesda)">
        <title>The reference genome sequence of Saccharomyces cerevisiae: Then and now.</title>
        <authorList>
            <person name="Engel S.R."/>
            <person name="Dietrich F.S."/>
            <person name="Fisk D.G."/>
            <person name="Binkley G."/>
            <person name="Balakrishnan R."/>
            <person name="Costanzo M.C."/>
            <person name="Dwight S.S."/>
            <person name="Hitz B.C."/>
            <person name="Karra K."/>
            <person name="Nash R.S."/>
            <person name="Weng S."/>
            <person name="Wong E.D."/>
            <person name="Lloyd P."/>
            <person name="Skrzypek M.S."/>
            <person name="Miyasato S.R."/>
            <person name="Simison M."/>
            <person name="Cherry J.M."/>
        </authorList>
    </citation>
    <scope>GENOME REANNOTATION</scope>
    <source>
        <strain>ATCC 204508 / S288c</strain>
    </source>
</reference>
<reference key="3">
    <citation type="journal article" date="1997" name="Yeast">
        <title>The sequence of a nearly unclonable 22.8 kb segment on the left arm chromosome VII from Saccharomyces cerevisiae reveals ARO2, RPL9A, TIP1, MRF1 genes and six new open reading frames.</title>
        <authorList>
            <person name="Voet M."/>
            <person name="Defoor E."/>
            <person name="Verhasselt P."/>
            <person name="Riles L."/>
            <person name="Robben J."/>
            <person name="Volckaert G."/>
        </authorList>
    </citation>
    <scope>NUCLEOTIDE SEQUENCE [GENOMIC DNA] OF 1-749</scope>
    <source>
        <strain>ATCC 96604 / S288c / FY1679</strain>
    </source>
</reference>
<reference key="4">
    <citation type="journal article" date="1996" name="Yeast">
        <title>Sequence analysis of a 14.6 kb DNA fragment of Saccharomyces cerevisiae chromosome VII reveals SEC27, SSM1b, a putative S-adenosylmethionine-dependent enzyme and six new open reading frames.</title>
        <authorList>
            <person name="Escribano V."/>
            <person name="Eraso P."/>
            <person name="Portillo F."/>
            <person name="Mazon M.J."/>
        </authorList>
    </citation>
    <scope>NUCLEOTIDE SEQUENCE [GENOMIC DNA] OF 616-802</scope>
    <source>
        <strain>ATCC 96604 / S288c / FY1679</strain>
    </source>
</reference>
<reference key="5">
    <citation type="journal article" date="2006" name="J. Biol. Chem.">
        <title>A screen for genes of heme uptake identifies the FLC family required for import of FAD into the endoplasmic reticulum.</title>
        <authorList>
            <person name="Protchenko O."/>
            <person name="Rodriguez-Suarez R."/>
            <person name="Androphy R."/>
            <person name="Bussey H."/>
            <person name="Philpott C.C."/>
        </authorList>
    </citation>
    <scope>SUBCELLULAR LOCATION</scope>
</reference>
<reference key="6">
    <citation type="journal article" date="2006" name="Proc. Natl. Acad. Sci. U.S.A.">
        <title>A global topology map of the Saccharomyces cerevisiae membrane proteome.</title>
        <authorList>
            <person name="Kim H."/>
            <person name="Melen K."/>
            <person name="Oesterberg M."/>
            <person name="von Heijne G."/>
        </authorList>
    </citation>
    <scope>TOPOLOGY [LARGE SCALE ANALYSIS]</scope>
    <source>
        <strain>ATCC 208353 / W303-1A</strain>
    </source>
</reference>
<reference key="7">
    <citation type="journal article" date="2007" name="J. Proteome Res.">
        <title>Large-scale phosphorylation analysis of alpha-factor-arrested Saccharomyces cerevisiae.</title>
        <authorList>
            <person name="Li X."/>
            <person name="Gerber S.A."/>
            <person name="Rudner A.D."/>
            <person name="Beausoleil S.A."/>
            <person name="Haas W."/>
            <person name="Villen J."/>
            <person name="Elias J.E."/>
            <person name="Gygi S.P."/>
        </authorList>
    </citation>
    <scope>IDENTIFICATION BY MASS SPECTROMETRY [LARGE SCALE ANALYSIS]</scope>
    <source>
        <strain>ADR376</strain>
    </source>
</reference>
<reference key="8">
    <citation type="journal article" date="2008" name="Mol. Cell. Proteomics">
        <title>A multidimensional chromatography technology for in-depth phosphoproteome analysis.</title>
        <authorList>
            <person name="Albuquerque C.P."/>
            <person name="Smolka M.B."/>
            <person name="Payne S.H."/>
            <person name="Bafna V."/>
            <person name="Eng J."/>
            <person name="Zhou H."/>
        </authorList>
    </citation>
    <scope>PHOSPHORYLATION [LARGE SCALE ANALYSIS] AT SER-616; SER-779 AND SER-782</scope>
    <scope>IDENTIFICATION BY MASS SPECTROMETRY [LARGE SCALE ANALYSIS]</scope>
</reference>
<reference key="9">
    <citation type="journal article" date="2009" name="Science">
        <title>Global analysis of Cdk1 substrate phosphorylation sites provides insights into evolution.</title>
        <authorList>
            <person name="Holt L.J."/>
            <person name="Tuch B.B."/>
            <person name="Villen J."/>
            <person name="Johnson A.D."/>
            <person name="Gygi S.P."/>
            <person name="Morgan D.O."/>
        </authorList>
    </citation>
    <scope>PHOSPHORYLATION [LARGE SCALE ANALYSIS] AT SER-616; SER-635; SER-779 AND SER-782</scope>
    <scope>IDENTIFICATION BY MASS SPECTROMETRY [LARGE SCALE ANALYSIS]</scope>
</reference>
<protein>
    <recommendedName>
        <fullName>Putative flavin carrier protein 3</fullName>
    </recommendedName>
    <alternativeName>
        <fullName>FAD transporter 3</fullName>
    </alternativeName>
    <alternativeName>
        <fullName>TRP-like ion channel FLC3</fullName>
    </alternativeName>
</protein>